<name>QUEA_BACC2</name>
<comment type="function">
    <text evidence="1">Transfers and isomerizes the ribose moiety from AdoMet to the 7-aminomethyl group of 7-deazaguanine (preQ1-tRNA) to give epoxyqueuosine (oQ-tRNA).</text>
</comment>
<comment type="catalytic activity">
    <reaction evidence="1">
        <text>7-aminomethyl-7-carbaguanosine(34) in tRNA + S-adenosyl-L-methionine = epoxyqueuosine(34) in tRNA + adenine + L-methionine + 2 H(+)</text>
        <dbReference type="Rhea" id="RHEA:32155"/>
        <dbReference type="Rhea" id="RHEA-COMP:10342"/>
        <dbReference type="Rhea" id="RHEA-COMP:18582"/>
        <dbReference type="ChEBI" id="CHEBI:15378"/>
        <dbReference type="ChEBI" id="CHEBI:16708"/>
        <dbReference type="ChEBI" id="CHEBI:57844"/>
        <dbReference type="ChEBI" id="CHEBI:59789"/>
        <dbReference type="ChEBI" id="CHEBI:82833"/>
        <dbReference type="ChEBI" id="CHEBI:194443"/>
        <dbReference type="EC" id="2.4.99.17"/>
    </reaction>
</comment>
<comment type="pathway">
    <text evidence="1">tRNA modification; tRNA-queuosine biosynthesis.</text>
</comment>
<comment type="subunit">
    <text evidence="1">Monomer.</text>
</comment>
<comment type="subcellular location">
    <subcellularLocation>
        <location evidence="1">Cytoplasm</location>
    </subcellularLocation>
</comment>
<comment type="similarity">
    <text evidence="1">Belongs to the QueA family.</text>
</comment>
<gene>
    <name evidence="1" type="primary">queA</name>
    <name type="ordered locus">BCG9842_B0698</name>
</gene>
<organism>
    <name type="scientific">Bacillus cereus (strain G9842)</name>
    <dbReference type="NCBI Taxonomy" id="405531"/>
    <lineage>
        <taxon>Bacteria</taxon>
        <taxon>Bacillati</taxon>
        <taxon>Bacillota</taxon>
        <taxon>Bacilli</taxon>
        <taxon>Bacillales</taxon>
        <taxon>Bacillaceae</taxon>
        <taxon>Bacillus</taxon>
        <taxon>Bacillus cereus group</taxon>
    </lineage>
</organism>
<feature type="chain" id="PRO_1000117524" description="S-adenosylmethionine:tRNA ribosyltransferase-isomerase">
    <location>
        <begin position="1"/>
        <end position="350"/>
    </location>
</feature>
<proteinExistence type="inferred from homology"/>
<sequence length="350" mass="39470">MDINLFDFHLPEELIAQVPLEDRETSRLMVLDRETGDIEHKHFTDILSYLHEGDCLVLNETKVMPARLHGVKEDTGAHIEVLLLKQEEGDKWETLVKPAKRVKEGTVISFGEGKLKATCTGTADQGGRQLEFSYDGIFYEILDELGEMPLPPYIKETLEDRDRYQTVYAKEIGSAAAPTAGLHFTEELLEKLKQKGVQLAFITLHVGLGTFRPVSADTIEEHHMHAEYYHMSEETAALLNRVKENGGRIITVGTTSTRTLETIATDHNGKLCAASGWTDIFMYPGYEFKAIDGLITNFHLPKSTLIMLVSAFANRDNVLHAYNEAVKEKYRFFSFGDAMFVASHAKMRNK</sequence>
<accession>B7IIT0</accession>
<reference key="1">
    <citation type="submission" date="2008-10" db="EMBL/GenBank/DDBJ databases">
        <title>Genome sequence of Bacillus cereus G9842.</title>
        <authorList>
            <person name="Dodson R.J."/>
            <person name="Durkin A.S."/>
            <person name="Rosovitz M.J."/>
            <person name="Rasko D.A."/>
            <person name="Hoffmaster A."/>
            <person name="Ravel J."/>
            <person name="Sutton G."/>
        </authorList>
    </citation>
    <scope>NUCLEOTIDE SEQUENCE [LARGE SCALE GENOMIC DNA]</scope>
    <source>
        <strain>G9842</strain>
    </source>
</reference>
<keyword id="KW-0963">Cytoplasm</keyword>
<keyword id="KW-0671">Queuosine biosynthesis</keyword>
<keyword id="KW-0949">S-adenosyl-L-methionine</keyword>
<keyword id="KW-0808">Transferase</keyword>
<dbReference type="EC" id="2.4.99.17" evidence="1"/>
<dbReference type="EMBL" id="CP001186">
    <property type="protein sequence ID" value="ACK97891.1"/>
    <property type="molecule type" value="Genomic_DNA"/>
</dbReference>
<dbReference type="RefSeq" id="WP_000354016.1">
    <property type="nucleotide sequence ID" value="NC_011772.1"/>
</dbReference>
<dbReference type="SMR" id="B7IIT0"/>
<dbReference type="KEGG" id="bcg:BCG9842_B0698"/>
<dbReference type="HOGENOM" id="CLU_039110_1_0_9"/>
<dbReference type="UniPathway" id="UPA00392"/>
<dbReference type="Proteomes" id="UP000006744">
    <property type="component" value="Chromosome"/>
</dbReference>
<dbReference type="GO" id="GO:0005737">
    <property type="term" value="C:cytoplasm"/>
    <property type="evidence" value="ECO:0007669"/>
    <property type="project" value="UniProtKB-SubCell"/>
</dbReference>
<dbReference type="GO" id="GO:0051075">
    <property type="term" value="F:S-adenosylmethionine:tRNA ribosyltransferase-isomerase activity"/>
    <property type="evidence" value="ECO:0007669"/>
    <property type="project" value="UniProtKB-EC"/>
</dbReference>
<dbReference type="GO" id="GO:0008616">
    <property type="term" value="P:queuosine biosynthetic process"/>
    <property type="evidence" value="ECO:0007669"/>
    <property type="project" value="UniProtKB-UniRule"/>
</dbReference>
<dbReference type="GO" id="GO:0002099">
    <property type="term" value="P:tRNA wobble guanine modification"/>
    <property type="evidence" value="ECO:0007669"/>
    <property type="project" value="TreeGrafter"/>
</dbReference>
<dbReference type="FunFam" id="2.40.10.240:FF:000002">
    <property type="entry name" value="S-adenosylmethionine:tRNA ribosyltransferase-isomerase"/>
    <property type="match status" value="1"/>
</dbReference>
<dbReference type="FunFam" id="3.40.1780.10:FF:000001">
    <property type="entry name" value="S-adenosylmethionine:tRNA ribosyltransferase-isomerase"/>
    <property type="match status" value="1"/>
</dbReference>
<dbReference type="Gene3D" id="2.40.10.240">
    <property type="entry name" value="QueA-like"/>
    <property type="match status" value="1"/>
</dbReference>
<dbReference type="Gene3D" id="3.40.1780.10">
    <property type="entry name" value="QueA-like"/>
    <property type="match status" value="1"/>
</dbReference>
<dbReference type="HAMAP" id="MF_00113">
    <property type="entry name" value="QueA"/>
    <property type="match status" value="1"/>
</dbReference>
<dbReference type="InterPro" id="IPR003699">
    <property type="entry name" value="QueA"/>
</dbReference>
<dbReference type="InterPro" id="IPR042118">
    <property type="entry name" value="QueA_dom1"/>
</dbReference>
<dbReference type="InterPro" id="IPR042119">
    <property type="entry name" value="QueA_dom2"/>
</dbReference>
<dbReference type="InterPro" id="IPR036100">
    <property type="entry name" value="QueA_sf"/>
</dbReference>
<dbReference type="NCBIfam" id="NF001140">
    <property type="entry name" value="PRK00147.1"/>
    <property type="match status" value="1"/>
</dbReference>
<dbReference type="NCBIfam" id="TIGR00113">
    <property type="entry name" value="queA"/>
    <property type="match status" value="1"/>
</dbReference>
<dbReference type="PANTHER" id="PTHR30307">
    <property type="entry name" value="S-ADENOSYLMETHIONINE:TRNA RIBOSYLTRANSFERASE-ISOMERASE"/>
    <property type="match status" value="1"/>
</dbReference>
<dbReference type="PANTHER" id="PTHR30307:SF0">
    <property type="entry name" value="S-ADENOSYLMETHIONINE:TRNA RIBOSYLTRANSFERASE-ISOMERASE"/>
    <property type="match status" value="1"/>
</dbReference>
<dbReference type="Pfam" id="PF02547">
    <property type="entry name" value="Queuosine_synth"/>
    <property type="match status" value="1"/>
</dbReference>
<dbReference type="SUPFAM" id="SSF111337">
    <property type="entry name" value="QueA-like"/>
    <property type="match status" value="1"/>
</dbReference>
<evidence type="ECO:0000255" key="1">
    <source>
        <dbReference type="HAMAP-Rule" id="MF_00113"/>
    </source>
</evidence>
<protein>
    <recommendedName>
        <fullName evidence="1">S-adenosylmethionine:tRNA ribosyltransferase-isomerase</fullName>
        <ecNumber evidence="1">2.4.99.17</ecNumber>
    </recommendedName>
    <alternativeName>
        <fullName evidence="1">Queuosine biosynthesis protein QueA</fullName>
    </alternativeName>
</protein>